<dbReference type="EC" id="2.1.1.199" evidence="1"/>
<dbReference type="EMBL" id="AP009178">
    <property type="protein sequence ID" value="BAF70139.1"/>
    <property type="molecule type" value="Genomic_DNA"/>
</dbReference>
<dbReference type="RefSeq" id="WP_012082402.1">
    <property type="nucleotide sequence ID" value="NC_009662.1"/>
</dbReference>
<dbReference type="SMR" id="A6Q3T0"/>
<dbReference type="FunCoup" id="A6Q3T0">
    <property type="interactions" value="482"/>
</dbReference>
<dbReference type="STRING" id="387092.NIS_1029"/>
<dbReference type="KEGG" id="nis:NIS_1029"/>
<dbReference type="eggNOG" id="COG0275">
    <property type="taxonomic scope" value="Bacteria"/>
</dbReference>
<dbReference type="HOGENOM" id="CLU_038422_3_0_7"/>
<dbReference type="InParanoid" id="A6Q3T0"/>
<dbReference type="OrthoDB" id="9806637at2"/>
<dbReference type="Proteomes" id="UP000001118">
    <property type="component" value="Chromosome"/>
</dbReference>
<dbReference type="GO" id="GO:0005737">
    <property type="term" value="C:cytoplasm"/>
    <property type="evidence" value="ECO:0007669"/>
    <property type="project" value="UniProtKB-SubCell"/>
</dbReference>
<dbReference type="GO" id="GO:0071424">
    <property type="term" value="F:rRNA (cytosine-N4-)-methyltransferase activity"/>
    <property type="evidence" value="ECO:0007669"/>
    <property type="project" value="UniProtKB-UniRule"/>
</dbReference>
<dbReference type="GO" id="GO:0070475">
    <property type="term" value="P:rRNA base methylation"/>
    <property type="evidence" value="ECO:0007669"/>
    <property type="project" value="UniProtKB-UniRule"/>
</dbReference>
<dbReference type="CDD" id="cd02440">
    <property type="entry name" value="AdoMet_MTases"/>
    <property type="match status" value="1"/>
</dbReference>
<dbReference type="Gene3D" id="1.10.150.170">
    <property type="entry name" value="Putative methyltransferase TM0872, insert domain"/>
    <property type="match status" value="1"/>
</dbReference>
<dbReference type="Gene3D" id="3.40.50.150">
    <property type="entry name" value="Vaccinia Virus protein VP39"/>
    <property type="match status" value="1"/>
</dbReference>
<dbReference type="HAMAP" id="MF_01007">
    <property type="entry name" value="16SrRNA_methyltr_H"/>
    <property type="match status" value="1"/>
</dbReference>
<dbReference type="InterPro" id="IPR002903">
    <property type="entry name" value="RsmH"/>
</dbReference>
<dbReference type="InterPro" id="IPR023397">
    <property type="entry name" value="SAM-dep_MeTrfase_MraW_recog"/>
</dbReference>
<dbReference type="InterPro" id="IPR029063">
    <property type="entry name" value="SAM-dependent_MTases_sf"/>
</dbReference>
<dbReference type="NCBIfam" id="TIGR00006">
    <property type="entry name" value="16S rRNA (cytosine(1402)-N(4))-methyltransferase RsmH"/>
    <property type="match status" value="1"/>
</dbReference>
<dbReference type="PANTHER" id="PTHR11265:SF0">
    <property type="entry name" value="12S RRNA N4-METHYLCYTIDINE METHYLTRANSFERASE"/>
    <property type="match status" value="1"/>
</dbReference>
<dbReference type="PANTHER" id="PTHR11265">
    <property type="entry name" value="S-ADENOSYL-METHYLTRANSFERASE MRAW"/>
    <property type="match status" value="1"/>
</dbReference>
<dbReference type="Pfam" id="PF01795">
    <property type="entry name" value="Methyltransf_5"/>
    <property type="match status" value="1"/>
</dbReference>
<dbReference type="PIRSF" id="PIRSF004486">
    <property type="entry name" value="MraW"/>
    <property type="match status" value="1"/>
</dbReference>
<dbReference type="SUPFAM" id="SSF81799">
    <property type="entry name" value="Putative methyltransferase TM0872, insert domain"/>
    <property type="match status" value="1"/>
</dbReference>
<dbReference type="SUPFAM" id="SSF53335">
    <property type="entry name" value="S-adenosyl-L-methionine-dependent methyltransferases"/>
    <property type="match status" value="1"/>
</dbReference>
<reference key="1">
    <citation type="journal article" date="2007" name="Proc. Natl. Acad. Sci. U.S.A.">
        <title>Deep-sea vent epsilon-proteobacterial genomes provide insights into emergence of pathogens.</title>
        <authorList>
            <person name="Nakagawa S."/>
            <person name="Takaki Y."/>
            <person name="Shimamura S."/>
            <person name="Reysenbach A.-L."/>
            <person name="Takai K."/>
            <person name="Horikoshi K."/>
        </authorList>
    </citation>
    <scope>NUCLEOTIDE SEQUENCE [LARGE SCALE GENOMIC DNA]</scope>
    <source>
        <strain>SB155-2</strain>
    </source>
</reference>
<protein>
    <recommendedName>
        <fullName evidence="1">Ribosomal RNA small subunit methyltransferase H</fullName>
        <ecNumber evidence="1">2.1.1.199</ecNumber>
    </recommendedName>
    <alternativeName>
        <fullName evidence="1">16S rRNA m(4)C1402 methyltransferase</fullName>
    </alternativeName>
    <alternativeName>
        <fullName evidence="1">rRNA (cytosine-N(4)-)-methyltransferase RsmH</fullName>
    </alternativeName>
</protein>
<sequence length="302" mass="33925">MNAPHKPVLLNEVLESFKDRKGTIVDATLGYGGHSEALLKSNPDIKIVGIDQDSEAIAFSKQRLASYGDRVQIIQGRFADVIEDILQTHDVQGVLADIGVSSLQLDKKDRGFSIHSENLDMRMDQNAELSAYHVVNTYDEEELKRIFKEYGEIRHSGKLAKAIIHNRPIQSATQLAEIAQKILPKNKRVHPATTLFQAIRIEVNKELDQLKGLLDALERHKPKGAKVAIITFHSLEDRIVKQHFKEWAKSCICPPEAMRCTCGANHALGNIVTKKPIVASIDELEENPRARSAKLRVFQFKE</sequence>
<evidence type="ECO:0000255" key="1">
    <source>
        <dbReference type="HAMAP-Rule" id="MF_01007"/>
    </source>
</evidence>
<feature type="chain" id="PRO_0000387008" description="Ribosomal RNA small subunit methyltransferase H">
    <location>
        <begin position="1"/>
        <end position="302"/>
    </location>
</feature>
<feature type="binding site" evidence="1">
    <location>
        <begin position="32"/>
        <end position="34"/>
    </location>
    <ligand>
        <name>S-adenosyl-L-methionine</name>
        <dbReference type="ChEBI" id="CHEBI:59789"/>
    </ligand>
</feature>
<feature type="binding site" evidence="1">
    <location>
        <position position="51"/>
    </location>
    <ligand>
        <name>S-adenosyl-L-methionine</name>
        <dbReference type="ChEBI" id="CHEBI:59789"/>
    </ligand>
</feature>
<feature type="binding site" evidence="1">
    <location>
        <position position="78"/>
    </location>
    <ligand>
        <name>S-adenosyl-L-methionine</name>
        <dbReference type="ChEBI" id="CHEBI:59789"/>
    </ligand>
</feature>
<feature type="binding site" evidence="1">
    <location>
        <position position="97"/>
    </location>
    <ligand>
        <name>S-adenosyl-L-methionine</name>
        <dbReference type="ChEBI" id="CHEBI:59789"/>
    </ligand>
</feature>
<feature type="binding site" evidence="1">
    <location>
        <position position="104"/>
    </location>
    <ligand>
        <name>S-adenosyl-L-methionine</name>
        <dbReference type="ChEBI" id="CHEBI:59789"/>
    </ligand>
</feature>
<gene>
    <name evidence="1" type="primary">rsmH</name>
    <name type="synonym">mraW</name>
    <name type="ordered locus">NIS_1029</name>
</gene>
<organism>
    <name type="scientific">Nitratiruptor sp. (strain SB155-2)</name>
    <dbReference type="NCBI Taxonomy" id="387092"/>
    <lineage>
        <taxon>Bacteria</taxon>
        <taxon>Pseudomonadati</taxon>
        <taxon>Campylobacterota</taxon>
        <taxon>Epsilonproteobacteria</taxon>
        <taxon>Nautiliales</taxon>
        <taxon>Nitratiruptoraceae</taxon>
        <taxon>Nitratiruptor</taxon>
    </lineage>
</organism>
<name>RSMH_NITSB</name>
<keyword id="KW-0963">Cytoplasm</keyword>
<keyword id="KW-0489">Methyltransferase</keyword>
<keyword id="KW-1185">Reference proteome</keyword>
<keyword id="KW-0698">rRNA processing</keyword>
<keyword id="KW-0949">S-adenosyl-L-methionine</keyword>
<keyword id="KW-0808">Transferase</keyword>
<proteinExistence type="inferred from homology"/>
<accession>A6Q3T0</accession>
<comment type="function">
    <text evidence="1">Specifically methylates the N4 position of cytidine in position 1402 (C1402) of 16S rRNA.</text>
</comment>
<comment type="catalytic activity">
    <reaction evidence="1">
        <text>cytidine(1402) in 16S rRNA + S-adenosyl-L-methionine = N(4)-methylcytidine(1402) in 16S rRNA + S-adenosyl-L-homocysteine + H(+)</text>
        <dbReference type="Rhea" id="RHEA:42928"/>
        <dbReference type="Rhea" id="RHEA-COMP:10286"/>
        <dbReference type="Rhea" id="RHEA-COMP:10287"/>
        <dbReference type="ChEBI" id="CHEBI:15378"/>
        <dbReference type="ChEBI" id="CHEBI:57856"/>
        <dbReference type="ChEBI" id="CHEBI:59789"/>
        <dbReference type="ChEBI" id="CHEBI:74506"/>
        <dbReference type="ChEBI" id="CHEBI:82748"/>
        <dbReference type="EC" id="2.1.1.199"/>
    </reaction>
</comment>
<comment type="subcellular location">
    <subcellularLocation>
        <location evidence="1">Cytoplasm</location>
    </subcellularLocation>
</comment>
<comment type="similarity">
    <text evidence="1">Belongs to the methyltransferase superfamily. RsmH family.</text>
</comment>